<keyword id="KW-1031">Host cell junction</keyword>
<keyword id="KW-0945">Host-virus interaction</keyword>
<keyword id="KW-1185">Reference proteome</keyword>
<keyword id="KW-0694">RNA-binding</keyword>
<keyword id="KW-0813">Transport</keyword>
<keyword id="KW-0916">Viral movement protein</keyword>
<dbReference type="EMBL" id="L32604">
    <property type="protein sequence ID" value="AAA50326.1"/>
    <property type="molecule type" value="mRNA"/>
</dbReference>
<dbReference type="EMBL" id="L32603">
    <property type="protein sequence ID" value="AAA50382.1"/>
    <property type="molecule type" value="mRNA"/>
</dbReference>
<dbReference type="RefSeq" id="NP_042283.1">
    <property type="nucleotide sequence ID" value="NC_001615.3"/>
</dbReference>
<dbReference type="GeneID" id="1489879"/>
<dbReference type="KEGG" id="vg:1489879"/>
<dbReference type="OrthoDB" id="33725at10239"/>
<dbReference type="Proteomes" id="UP000002326">
    <property type="component" value="Genome"/>
</dbReference>
<dbReference type="GO" id="GO:0044219">
    <property type="term" value="C:host cell plasmodesma"/>
    <property type="evidence" value="ECO:0007669"/>
    <property type="project" value="UniProtKB-SubCell"/>
</dbReference>
<dbReference type="GO" id="GO:0003723">
    <property type="term" value="F:RNA binding"/>
    <property type="evidence" value="ECO:0007669"/>
    <property type="project" value="UniProtKB-KW"/>
</dbReference>
<dbReference type="GO" id="GO:0046740">
    <property type="term" value="P:transport of virus in host, cell to cell"/>
    <property type="evidence" value="ECO:0007669"/>
    <property type="project" value="UniProtKB-KW"/>
</dbReference>
<organismHost>
    <name type="scientific">Aphis</name>
    <dbReference type="NCBI Taxonomy" id="80764"/>
</organismHost>
<organismHost>
    <name type="scientific">Bidens pilosa</name>
    <name type="common">Hairy beggarticks</name>
    <name type="synonym">Cobbler's pegs</name>
    <dbReference type="NCBI Taxonomy" id="42337"/>
</organismHost>
<organismHost>
    <name type="scientific">Lactuca sativa</name>
    <name type="common">Garden lettuce</name>
    <dbReference type="NCBI Taxonomy" id="4236"/>
</organismHost>
<organismHost>
    <name type="scientific">Sonchus oleraceus</name>
    <name type="common">Common sowthistle</name>
    <dbReference type="NCBI Taxonomy" id="50207"/>
</organismHost>
<comment type="function">
    <text evidence="1">Transports viral genome to neighboring plant cells directly through plasmosdesmata, without any budding. The movement protein allows efficient cell to cell propagation, by bypassing the host cell wall barrier (By similarity).</text>
</comment>
<comment type="subunit">
    <text>Interacts with nucleoprotein.</text>
</comment>
<comment type="subcellular location">
    <subcellularLocation>
        <location evidence="3">Host cell junction</location>
        <location evidence="3">Host plasmodesma</location>
    </subcellularLocation>
</comment>
<organism>
    <name type="scientific">Sonchus yellow net virus</name>
    <name type="common">SYNV</name>
    <dbReference type="NCBI Taxonomy" id="11307"/>
    <lineage>
        <taxon>Viruses</taxon>
        <taxon>Riboviria</taxon>
        <taxon>Orthornavirae</taxon>
        <taxon>Negarnaviricota</taxon>
        <taxon>Haploviricotina</taxon>
        <taxon>Monjiviricetes</taxon>
        <taxon>Mononegavirales</taxon>
        <taxon>Rhabdoviridae</taxon>
        <taxon>Betarhabdovirinae</taxon>
        <taxon>Betanucleorhabdovirus</taxon>
        <taxon>Betanucleorhabdovirus retesonchi</taxon>
    </lineage>
</organism>
<reference key="1">
    <citation type="journal article" date="1994" name="Virology">
        <title>Characterization and detection of sc4: a sixth gene encoded by sonchus yellow net virus.</title>
        <authorList>
            <person name="Scholthof K.B."/>
            <person name="Hillman B.I."/>
            <person name="Modrell B."/>
            <person name="Heaton L.A."/>
            <person name="Jackson A.O."/>
        </authorList>
    </citation>
    <scope>NUCLEOTIDE SEQUENCE [MRNA]</scope>
    <scope>CHARACTERIZATION</scope>
</reference>
<reference key="2">
    <citation type="journal article" date="2007" name="J. Gen. Virol.">
        <title>Membrane and protein dynamics in live plant nuclei infected with Sonchus yellow net virus, a plant-adapted rhabdovirus.</title>
        <authorList>
            <person name="Goodin M.M."/>
            <person name="Chakrabarty R."/>
            <person name="Yelton S."/>
            <person name="Martin K."/>
            <person name="Clark A."/>
            <person name="Brooks R."/>
        </authorList>
    </citation>
    <scope>SUBCELLULAR LOCATION</scope>
</reference>
<sequence length="324" mass="36710">MEGLSSKAQTMGREDDNRSSKMKVFHSELVYGDNHNISIKKADLTGQHKMMLLLSSALRIGSVHMDVSRILVKWCPYITPNMNTTIGITIKNNHHDDMSNINDMSTYISVKGKMSEALQITWHPASTLVYKKGMSCIFPWVVDVDTGSTEQESGSPALGEIKIWCYFKMQYHKPSTRHIARAEIAPSIEWGNTNFPYYVPFAMIRRARGIRPLDVFSTNQYSMFLEDVIKHVGTDSIKESDIVPIMSTMSQEDMMMINEKNKTCLLKRGGSYCSCKDVIENVVKEINMNRDRKYDNHGLLLSGYIAGSTSGRFQTVPMLSDISY</sequence>
<name>MVP_SYNV</name>
<accession>Q89914</accession>
<evidence type="ECO:0000250" key="1"/>
<evidence type="ECO:0000256" key="2">
    <source>
        <dbReference type="SAM" id="MobiDB-lite"/>
    </source>
</evidence>
<evidence type="ECO:0000269" key="3">
    <source>
    </source>
</evidence>
<proteinExistence type="evidence at protein level"/>
<feature type="chain" id="PRO_0000299231" description="Movement protein">
    <location>
        <begin position="1"/>
        <end position="324"/>
    </location>
</feature>
<feature type="region of interest" description="Disordered" evidence="2">
    <location>
        <begin position="1"/>
        <end position="20"/>
    </location>
</feature>
<protein>
    <recommendedName>
        <fullName>Movement protein</fullName>
        <shortName>MP</shortName>
    </recommendedName>
    <alternativeName>
        <fullName>Cell-to-cell transport protein</fullName>
    </alternativeName>
    <alternativeName>
        <fullName>Protein Sc4</fullName>
    </alternativeName>
</protein>
<gene>
    <name type="primary">sc4</name>
</gene>